<evidence type="ECO:0000250" key="1">
    <source>
        <dbReference type="UniProtKB" id="Q9Y2T5"/>
    </source>
</evidence>
<evidence type="ECO:0000255" key="2"/>
<evidence type="ECO:0000255" key="3">
    <source>
        <dbReference type="PROSITE-ProRule" id="PRU00521"/>
    </source>
</evidence>
<accession>A6QLE7</accession>
<proteinExistence type="evidence at transcript level"/>
<sequence length="361" mass="41172">MNDSRWTEWRILNTSSGILNVSERHSCPLGFGHYSAVDVCIFETIVIVLLTFLIIAGNLTVIFVFHCAPLLHHYTTSYFIQTMAYADLFVGVSCLVPTLSLLHYSTGIHESLTCQVFGYIISVLKSVSMACLACISVDRYLAITKPLSYNQLVTPCRLRICIILIWIYSCLIFLPSFFGWGKPGYHGDIFEWCATSWLTSAYFTGFIVCLLYAPAALVVCFTYFHIFKICRQHTKEINDRRARFPSHEAAASRDAGHSPDRRYAMVLFRITSVFYMLWLPYIIYFLLESSRVLDNPTLSFLTTWLAISNSFCNCVIYSLSNSVFRLGLRRLSETMCTSCMCVKDKEARDPKPRKRANSCSI</sequence>
<gene>
    <name evidence="1" type="primary">GPR52</name>
</gene>
<name>GPR52_BOVIN</name>
<protein>
    <recommendedName>
        <fullName evidence="1">G-protein coupled receptor 52</fullName>
    </recommendedName>
</protein>
<organism>
    <name type="scientific">Bos taurus</name>
    <name type="common">Bovine</name>
    <dbReference type="NCBI Taxonomy" id="9913"/>
    <lineage>
        <taxon>Eukaryota</taxon>
        <taxon>Metazoa</taxon>
        <taxon>Chordata</taxon>
        <taxon>Craniata</taxon>
        <taxon>Vertebrata</taxon>
        <taxon>Euteleostomi</taxon>
        <taxon>Mammalia</taxon>
        <taxon>Eutheria</taxon>
        <taxon>Laurasiatheria</taxon>
        <taxon>Artiodactyla</taxon>
        <taxon>Ruminantia</taxon>
        <taxon>Pecora</taxon>
        <taxon>Bovidae</taxon>
        <taxon>Bovinae</taxon>
        <taxon>Bos</taxon>
    </lineage>
</organism>
<dbReference type="EMBL" id="BC147938">
    <property type="protein sequence ID" value="AAI47939.1"/>
    <property type="molecule type" value="mRNA"/>
</dbReference>
<dbReference type="RefSeq" id="NP_001093774.1">
    <property type="nucleotide sequence ID" value="NM_001100304.1"/>
</dbReference>
<dbReference type="SMR" id="A6QLE7"/>
<dbReference type="FunCoup" id="A6QLE7">
    <property type="interactions" value="134"/>
</dbReference>
<dbReference type="STRING" id="9913.ENSBTAP00000074497"/>
<dbReference type="GlyCosmos" id="A6QLE7">
    <property type="glycosylation" value="3 sites, No reported glycans"/>
</dbReference>
<dbReference type="GlyGen" id="A6QLE7">
    <property type="glycosylation" value="3 sites"/>
</dbReference>
<dbReference type="PaxDb" id="9913-ENSBTAP00000052985"/>
<dbReference type="GeneID" id="506159"/>
<dbReference type="KEGG" id="bta:506159"/>
<dbReference type="CTD" id="9293"/>
<dbReference type="eggNOG" id="KOG3656">
    <property type="taxonomic scope" value="Eukaryota"/>
</dbReference>
<dbReference type="InParanoid" id="A6QLE7"/>
<dbReference type="OrthoDB" id="6376512at2759"/>
<dbReference type="Proteomes" id="UP000009136">
    <property type="component" value="Unplaced"/>
</dbReference>
<dbReference type="GO" id="GO:0005886">
    <property type="term" value="C:plasma membrane"/>
    <property type="evidence" value="ECO:0000318"/>
    <property type="project" value="GO_Central"/>
</dbReference>
<dbReference type="GO" id="GO:0004930">
    <property type="term" value="F:G protein-coupled receptor activity"/>
    <property type="evidence" value="ECO:0000250"/>
    <property type="project" value="UniProtKB"/>
</dbReference>
<dbReference type="GO" id="GO:0007186">
    <property type="term" value="P:G protein-coupled receptor signaling pathway"/>
    <property type="evidence" value="ECO:0000318"/>
    <property type="project" value="GO_Central"/>
</dbReference>
<dbReference type="GO" id="GO:0007626">
    <property type="term" value="P:locomotory behavior"/>
    <property type="evidence" value="ECO:0000250"/>
    <property type="project" value="UniProtKB"/>
</dbReference>
<dbReference type="GO" id="GO:0009410">
    <property type="term" value="P:response to xenobiotic stimulus"/>
    <property type="evidence" value="ECO:0000250"/>
    <property type="project" value="UniProtKB"/>
</dbReference>
<dbReference type="CDD" id="cd00637">
    <property type="entry name" value="7tm_classA_rhodopsin-like"/>
    <property type="match status" value="1"/>
</dbReference>
<dbReference type="FunFam" id="1.20.1070.10:FF:000177">
    <property type="entry name" value="probable G-protein coupled receptor 52"/>
    <property type="match status" value="1"/>
</dbReference>
<dbReference type="Gene3D" id="1.20.1070.10">
    <property type="entry name" value="Rhodopsin 7-helix transmembrane proteins"/>
    <property type="match status" value="1"/>
</dbReference>
<dbReference type="InterPro" id="IPR050125">
    <property type="entry name" value="GPCR_opsins"/>
</dbReference>
<dbReference type="InterPro" id="IPR000276">
    <property type="entry name" value="GPCR_Rhodpsn"/>
</dbReference>
<dbReference type="InterPro" id="IPR017452">
    <property type="entry name" value="GPCR_Rhodpsn_7TM"/>
</dbReference>
<dbReference type="PANTHER" id="PTHR24240">
    <property type="entry name" value="OPSIN"/>
    <property type="match status" value="1"/>
</dbReference>
<dbReference type="Pfam" id="PF00001">
    <property type="entry name" value="7tm_1"/>
    <property type="match status" value="1"/>
</dbReference>
<dbReference type="PRINTS" id="PR00237">
    <property type="entry name" value="GPCRRHODOPSN"/>
</dbReference>
<dbReference type="SUPFAM" id="SSF81321">
    <property type="entry name" value="Family A G protein-coupled receptor-like"/>
    <property type="match status" value="1"/>
</dbReference>
<dbReference type="PROSITE" id="PS00237">
    <property type="entry name" value="G_PROTEIN_RECEP_F1_1"/>
    <property type="match status" value="1"/>
</dbReference>
<dbReference type="PROSITE" id="PS50262">
    <property type="entry name" value="G_PROTEIN_RECEP_F1_2"/>
    <property type="match status" value="1"/>
</dbReference>
<reference key="1">
    <citation type="submission" date="2007-06" db="EMBL/GenBank/DDBJ databases">
        <authorList>
            <consortium name="NIH - Mammalian Gene Collection (MGC) project"/>
        </authorList>
    </citation>
    <scope>NUCLEOTIDE SEQUENCE [LARGE SCALE MRNA]</scope>
    <source>
        <strain>Hereford</strain>
        <tissue>Basal ganglia</tissue>
    </source>
</reference>
<keyword id="KW-1003">Cell membrane</keyword>
<keyword id="KW-1015">Disulfide bond</keyword>
<keyword id="KW-0297">G-protein coupled receptor</keyword>
<keyword id="KW-0325">Glycoprotein</keyword>
<keyword id="KW-0472">Membrane</keyword>
<keyword id="KW-0675">Receptor</keyword>
<keyword id="KW-1185">Reference proteome</keyword>
<keyword id="KW-0807">Transducer</keyword>
<keyword id="KW-0812">Transmembrane</keyword>
<keyword id="KW-1133">Transmembrane helix</keyword>
<feature type="chain" id="PRO_0000307679" description="G-protein coupled receptor 52">
    <location>
        <begin position="1"/>
        <end position="361"/>
    </location>
</feature>
<feature type="topological domain" description="Extracellular" evidence="2">
    <location>
        <begin position="1"/>
        <end position="44"/>
    </location>
</feature>
<feature type="transmembrane region" description="Helical; Name=1" evidence="2">
    <location>
        <begin position="45"/>
        <end position="65"/>
    </location>
</feature>
<feature type="topological domain" description="Cytoplasmic" evidence="2">
    <location>
        <begin position="66"/>
        <end position="87"/>
    </location>
</feature>
<feature type="transmembrane region" description="Helical; Name=2" evidence="2">
    <location>
        <begin position="88"/>
        <end position="108"/>
    </location>
</feature>
<feature type="topological domain" description="Extracellular" evidence="2">
    <location>
        <begin position="109"/>
        <end position="115"/>
    </location>
</feature>
<feature type="transmembrane region" description="Helical; Name=3" evidence="2">
    <location>
        <begin position="116"/>
        <end position="136"/>
    </location>
</feature>
<feature type="topological domain" description="Cytoplasmic" evidence="2">
    <location>
        <begin position="137"/>
        <end position="159"/>
    </location>
</feature>
<feature type="transmembrane region" description="Helical; Name=4" evidence="2">
    <location>
        <begin position="160"/>
        <end position="180"/>
    </location>
</feature>
<feature type="topological domain" description="Extracellular" evidence="2">
    <location>
        <begin position="181"/>
        <end position="200"/>
    </location>
</feature>
<feature type="transmembrane region" description="Helical; Name=5" evidence="2">
    <location>
        <begin position="201"/>
        <end position="221"/>
    </location>
</feature>
<feature type="topological domain" description="Cytoplasmic" evidence="2">
    <location>
        <begin position="222"/>
        <end position="265"/>
    </location>
</feature>
<feature type="transmembrane region" description="Helical; Name=6" evidence="2">
    <location>
        <begin position="266"/>
        <end position="286"/>
    </location>
</feature>
<feature type="topological domain" description="Extracellular" evidence="2">
    <location>
        <begin position="287"/>
        <end position="296"/>
    </location>
</feature>
<feature type="transmembrane region" description="Helical; Name=7" evidence="2">
    <location>
        <begin position="297"/>
        <end position="317"/>
    </location>
</feature>
<feature type="topological domain" description="Cytoplasmic" evidence="2">
    <location>
        <begin position="318"/>
        <end position="361"/>
    </location>
</feature>
<feature type="glycosylation site" description="N-linked (GlcNAc...) asparagine" evidence="2">
    <location>
        <position position="2"/>
    </location>
</feature>
<feature type="glycosylation site" description="N-linked (GlcNAc...) asparagine" evidence="2">
    <location>
        <position position="13"/>
    </location>
</feature>
<feature type="glycosylation site" description="N-linked (GlcNAc...) asparagine" evidence="2">
    <location>
        <position position="20"/>
    </location>
</feature>
<feature type="disulfide bond" evidence="3">
    <location>
        <begin position="114"/>
        <end position="193"/>
    </location>
</feature>
<comment type="function">
    <text evidence="1">G- protein coupled receptor activated by antipsychotics reserpine leading to an increase in intracellular cAMP and its internalization. May play a role in locomotor activity through modulation of dopamine, NMDA and ADORA2A-induced locomotor activity. These behavioral changes are accompanied by modulation of the dopamine receptor signaling pathway in striatum. Modulates HTT level via cAMP-dependent but PKA independent mechanisms throught activation of RAB39B that translocates HTT to the endoplasmic reticulum, thus avoiding proteasome degradation.</text>
</comment>
<comment type="subcellular location">
    <subcellularLocation>
        <location>Cell membrane</location>
        <topology>Multi-pass membrane protein</topology>
    </subcellularLocation>
</comment>
<comment type="similarity">
    <text evidence="3">Belongs to the G-protein coupled receptor 1 family.</text>
</comment>